<protein>
    <recommendedName>
        <fullName>Syntaxin-7</fullName>
    </recommendedName>
</protein>
<sequence length="261" mass="29851">MSYTPGIGGDPAQLAQRISSNIQKITQCSAEIQRTLNQLGTPQDTPELRQQLQQEQQYTNQLAKETDKYIKEFGFLPTTPSEQRQRKIQKDRLVAEFTTALTNFQKVQRQAAEREKEFVARVRASSRVSGGFPEDSSKEKNFVSWESQTQPQVQVQDEEITEDDLRLIHERESSIRQLEADIMDINEIFKDLGMMIHEQGDVIDSIEANVESAEVHVQQANQQLSRAANYQRKSRKTLCIIILILVVGIVIIFFIVWGLKG</sequence>
<reference key="1">
    <citation type="journal article" date="1998" name="J. Biol. Chem.">
        <title>Syntaxin 7, a novel syntaxin member associated with the early endosomal compartment.</title>
        <authorList>
            <person name="Wong S.H."/>
            <person name="Xu Y."/>
            <person name="Zhang T."/>
            <person name="Hong W."/>
        </authorList>
    </citation>
    <scope>NUCLEOTIDE SEQUENCE [MRNA]</scope>
    <scope>CHARACTERIZATION</scope>
    <source>
        <tissue>Brain</tissue>
    </source>
</reference>
<reference key="2">
    <citation type="journal article" date="2000" name="EMBO J.">
        <title>A SNARE complex mediating fusion of late endosomes defines conserved properties of SNARE structure and function.</title>
        <authorList>
            <person name="Antonin W."/>
            <person name="Holroyd C."/>
            <person name="Fasshauer D."/>
            <person name="Pabst S."/>
            <person name="Fischer von Mollard G."/>
            <person name="Jahn R."/>
        </authorList>
    </citation>
    <scope>NUCLEOTIDE SEQUENCE [MRNA]</scope>
    <scope>SNARE COMPLEX CHARACTERIZATION</scope>
</reference>
<reference key="3">
    <citation type="journal article" date="2004" name="Genome Res.">
        <title>The status, quality, and expansion of the NIH full-length cDNA project: the Mammalian Gene Collection (MGC).</title>
        <authorList>
            <consortium name="The MGC Project Team"/>
        </authorList>
    </citation>
    <scope>NUCLEOTIDE SEQUENCE [LARGE SCALE MRNA]</scope>
    <source>
        <tissue>Heart</tissue>
    </source>
</reference>
<reference key="4">
    <citation type="journal article" date="2004" name="EMBO Rep.">
        <title>Combinatorial SNARE complexes with VAMP7 or VAMP8 define different late endocytic fusion events.</title>
        <authorList>
            <person name="Pryor P.R."/>
            <person name="Mullock B.M."/>
            <person name="Bright N.A."/>
            <person name="Lindsay M.R."/>
            <person name="Gray S.R."/>
            <person name="Richardson S.C.W."/>
            <person name="Stewart A."/>
            <person name="James D.E."/>
            <person name="Piper R.C."/>
            <person name="Luzio J.P."/>
        </authorList>
    </citation>
    <scope>SNARE COMPLEX CHARACTERIZATION</scope>
</reference>
<comment type="function">
    <text evidence="1">May be involved in protein trafficking from the plasma membrane to the early endosome (EE) as well as in homotypic fusion of endocytic organelles. Mediates the endocytic trafficking from early endosomes to late endosomes and lysosomes (By similarity).</text>
</comment>
<comment type="subunit">
    <text evidence="1 3">Interacts with VPS11, VPS16 and VPS18. Interacts with VPS33A (By similarity). Forms a SNARE complex with VTI1B, STX8 and VAMP8 which functions in the homotypic fusion of late endosomes. Component of the SNARE complex composed of STX7, STX8, VAMP7 and VTI1B that is required for heterotypic fusion of late endosomes with lysosomes. Interacts with TPC1 (By similarity).</text>
</comment>
<comment type="subcellular location">
    <subcellularLocation>
        <location evidence="1">Early endosome membrane</location>
        <topology evidence="1">Single-pass type IV membrane protein</topology>
    </subcellularLocation>
</comment>
<comment type="tissue specificity">
    <text>Detected in all tissues tested. Highest expression is found in kidney followed by lung, spleen, heart and brain. Lower expression, in skeletal muscle, liver and testis.</text>
</comment>
<comment type="similarity">
    <text evidence="7">Belongs to the syntaxin family.</text>
</comment>
<feature type="initiator methionine" description="Removed" evidence="2">
    <location>
        <position position="1"/>
    </location>
</feature>
<feature type="chain" id="PRO_0000210216" description="Syntaxin-7">
    <location>
        <begin position="2"/>
        <end position="261"/>
    </location>
</feature>
<feature type="topological domain" description="Cytoplasmic" evidence="4">
    <location>
        <begin position="2"/>
        <end position="238"/>
    </location>
</feature>
<feature type="transmembrane region" description="Helical; Anchor for type IV membrane protein" evidence="4">
    <location>
        <begin position="239"/>
        <end position="259"/>
    </location>
</feature>
<feature type="topological domain" description="Vesicular" evidence="4">
    <location>
        <begin position="260"/>
        <end position="261"/>
    </location>
</feature>
<feature type="domain" description="t-SNARE coiled-coil homology" evidence="5">
    <location>
        <begin position="165"/>
        <end position="227"/>
    </location>
</feature>
<feature type="region of interest" description="Disordered" evidence="6">
    <location>
        <begin position="128"/>
        <end position="148"/>
    </location>
</feature>
<feature type="coiled-coil region" evidence="4">
    <location>
        <begin position="47"/>
        <end position="68"/>
    </location>
</feature>
<feature type="modified residue" description="N-acetylserine" evidence="2">
    <location>
        <position position="2"/>
    </location>
</feature>
<feature type="modified residue" description="Phosphothreonine" evidence="2">
    <location>
        <position position="4"/>
    </location>
</feature>
<feature type="modified residue" description="Phosphothreonine" evidence="3">
    <location>
        <position position="79"/>
    </location>
</feature>
<feature type="modified residue" description="Phosphoserine" evidence="3">
    <location>
        <position position="125"/>
    </location>
</feature>
<feature type="modified residue" description="Phosphoserine" evidence="2">
    <location>
        <position position="126"/>
    </location>
</feature>
<feature type="modified residue" description="Phosphoserine" evidence="2">
    <location>
        <position position="129"/>
    </location>
</feature>
<feature type="modified residue" description="Phosphoserine" evidence="2">
    <location>
        <position position="205"/>
    </location>
</feature>
<feature type="sequence conflict" description="In Ref. 1; AAC17131." evidence="7" ref="1">
    <original>E</original>
    <variation>A</variation>
    <location>
        <position position="139"/>
    </location>
</feature>
<gene>
    <name type="primary">Stx7</name>
</gene>
<accession>O70257</accession>
<accession>Q5U337</accession>
<keyword id="KW-0007">Acetylation</keyword>
<keyword id="KW-0175">Coiled coil</keyword>
<keyword id="KW-0967">Endosome</keyword>
<keyword id="KW-0472">Membrane</keyword>
<keyword id="KW-0597">Phosphoprotein</keyword>
<keyword id="KW-1185">Reference proteome</keyword>
<keyword id="KW-0812">Transmembrane</keyword>
<keyword id="KW-1133">Transmembrane helix</keyword>
<proteinExistence type="evidence at protein level"/>
<dbReference type="EMBL" id="AF031430">
    <property type="protein sequence ID" value="AAC17131.1"/>
    <property type="molecule type" value="mRNA"/>
</dbReference>
<dbReference type="EMBL" id="BC085737">
    <property type="protein sequence ID" value="AAH85737.1"/>
    <property type="molecule type" value="mRNA"/>
</dbReference>
<dbReference type="RefSeq" id="NP_068641.2">
    <property type="nucleotide sequence ID" value="NM_021869.2"/>
</dbReference>
<dbReference type="RefSeq" id="XP_017445133.1">
    <property type="nucleotide sequence ID" value="XM_017589644.3"/>
</dbReference>
<dbReference type="RefSeq" id="XP_017445134.1">
    <property type="nucleotide sequence ID" value="XM_017589645.1"/>
</dbReference>
<dbReference type="RefSeq" id="XP_017445135.1">
    <property type="nucleotide sequence ID" value="XM_017589646.1"/>
</dbReference>
<dbReference type="RefSeq" id="XP_038944960.1">
    <property type="nucleotide sequence ID" value="XM_039089032.2"/>
</dbReference>
<dbReference type="SMR" id="O70257"/>
<dbReference type="BioGRID" id="248851">
    <property type="interactions" value="3"/>
</dbReference>
<dbReference type="CORUM" id="O70257"/>
<dbReference type="DIP" id="DIP-37411N"/>
<dbReference type="FunCoup" id="O70257">
    <property type="interactions" value="2313"/>
</dbReference>
<dbReference type="IntAct" id="O70257">
    <property type="interactions" value="6"/>
</dbReference>
<dbReference type="STRING" id="10116.ENSRNOP00000021318"/>
<dbReference type="iPTMnet" id="O70257"/>
<dbReference type="PhosphoSitePlus" id="O70257"/>
<dbReference type="SwissPalm" id="O70257"/>
<dbReference type="jPOST" id="O70257"/>
<dbReference type="PaxDb" id="10116-ENSRNOP00000021318"/>
<dbReference type="GeneID" id="60466"/>
<dbReference type="KEGG" id="rno:60466"/>
<dbReference type="AGR" id="RGD:619747"/>
<dbReference type="CTD" id="8417"/>
<dbReference type="RGD" id="619747">
    <property type="gene designation" value="Stx7"/>
</dbReference>
<dbReference type="VEuPathDB" id="HostDB:ENSRNOG00000015670"/>
<dbReference type="eggNOG" id="KOG0811">
    <property type="taxonomic scope" value="Eukaryota"/>
</dbReference>
<dbReference type="HOGENOM" id="CLU_059257_1_1_1"/>
<dbReference type="InParanoid" id="O70257"/>
<dbReference type="OrthoDB" id="70815at9989"/>
<dbReference type="PhylomeDB" id="O70257"/>
<dbReference type="TreeFam" id="TF315607"/>
<dbReference type="PRO" id="PR:O70257"/>
<dbReference type="Proteomes" id="UP000002494">
    <property type="component" value="Chromosome 1"/>
</dbReference>
<dbReference type="Bgee" id="ENSRNOG00000015670">
    <property type="expression patterns" value="Expressed in Ammon's horn and 20 other cell types or tissues"/>
</dbReference>
<dbReference type="ExpressionAtlas" id="O70257">
    <property type="expression patterns" value="baseline and differential"/>
</dbReference>
<dbReference type="GO" id="GO:0042582">
    <property type="term" value="C:azurophil granule"/>
    <property type="evidence" value="ECO:0000266"/>
    <property type="project" value="RGD"/>
</dbReference>
<dbReference type="GO" id="GO:0005769">
    <property type="term" value="C:early endosome"/>
    <property type="evidence" value="ECO:0000266"/>
    <property type="project" value="RGD"/>
</dbReference>
<dbReference type="GO" id="GO:0031901">
    <property type="term" value="C:early endosome membrane"/>
    <property type="evidence" value="ECO:0007669"/>
    <property type="project" value="UniProtKB-SubCell"/>
</dbReference>
<dbReference type="GO" id="GO:0030139">
    <property type="term" value="C:endocytic vesicle"/>
    <property type="evidence" value="ECO:0000266"/>
    <property type="project" value="RGD"/>
</dbReference>
<dbReference type="GO" id="GO:0012505">
    <property type="term" value="C:endomembrane system"/>
    <property type="evidence" value="ECO:0000318"/>
    <property type="project" value="GO_Central"/>
</dbReference>
<dbReference type="GO" id="GO:0005768">
    <property type="term" value="C:endosome"/>
    <property type="evidence" value="ECO:0000314"/>
    <property type="project" value="RGD"/>
</dbReference>
<dbReference type="GO" id="GO:0001772">
    <property type="term" value="C:immunological synapse"/>
    <property type="evidence" value="ECO:0000266"/>
    <property type="project" value="RGD"/>
</dbReference>
<dbReference type="GO" id="GO:0005770">
    <property type="term" value="C:late endosome"/>
    <property type="evidence" value="ECO:0000266"/>
    <property type="project" value="RGD"/>
</dbReference>
<dbReference type="GO" id="GO:0031902">
    <property type="term" value="C:late endosome membrane"/>
    <property type="evidence" value="ECO:0000314"/>
    <property type="project" value="RGD"/>
</dbReference>
<dbReference type="GO" id="GO:0005765">
    <property type="term" value="C:lysosomal membrane"/>
    <property type="evidence" value="ECO:0000314"/>
    <property type="project" value="RGD"/>
</dbReference>
<dbReference type="GO" id="GO:0005764">
    <property type="term" value="C:lysosome"/>
    <property type="evidence" value="ECO:0000266"/>
    <property type="project" value="RGD"/>
</dbReference>
<dbReference type="GO" id="GO:0048471">
    <property type="term" value="C:perinuclear region of cytoplasm"/>
    <property type="evidence" value="ECO:0000266"/>
    <property type="project" value="RGD"/>
</dbReference>
<dbReference type="GO" id="GO:0005886">
    <property type="term" value="C:plasma membrane"/>
    <property type="evidence" value="ECO:0000266"/>
    <property type="project" value="RGD"/>
</dbReference>
<dbReference type="GO" id="GO:0055037">
    <property type="term" value="C:recycling endosome"/>
    <property type="evidence" value="ECO:0000266"/>
    <property type="project" value="RGD"/>
</dbReference>
<dbReference type="GO" id="GO:0031201">
    <property type="term" value="C:SNARE complex"/>
    <property type="evidence" value="ECO:0000314"/>
    <property type="project" value="UniProtKB"/>
</dbReference>
<dbReference type="GO" id="GO:0008021">
    <property type="term" value="C:synaptic vesicle"/>
    <property type="evidence" value="ECO:0000318"/>
    <property type="project" value="GO_Central"/>
</dbReference>
<dbReference type="GO" id="GO:0030672">
    <property type="term" value="C:synaptic vesicle membrane"/>
    <property type="evidence" value="ECO:0000314"/>
    <property type="project" value="SynGO"/>
</dbReference>
<dbReference type="GO" id="GO:0043195">
    <property type="term" value="C:terminal bouton"/>
    <property type="evidence" value="ECO:0007005"/>
    <property type="project" value="ParkinsonsUK-UCL"/>
</dbReference>
<dbReference type="GO" id="GO:0070820">
    <property type="term" value="C:tertiary granule"/>
    <property type="evidence" value="ECO:0000266"/>
    <property type="project" value="RGD"/>
</dbReference>
<dbReference type="GO" id="GO:0031982">
    <property type="term" value="C:vesicle"/>
    <property type="evidence" value="ECO:0000266"/>
    <property type="project" value="RGD"/>
</dbReference>
<dbReference type="GO" id="GO:0019869">
    <property type="term" value="F:chloride channel inhibitor activity"/>
    <property type="evidence" value="ECO:0000266"/>
    <property type="project" value="RGD"/>
</dbReference>
<dbReference type="GO" id="GO:0044877">
    <property type="term" value="F:protein-containing complex binding"/>
    <property type="evidence" value="ECO:0000314"/>
    <property type="project" value="RGD"/>
</dbReference>
<dbReference type="GO" id="GO:0005484">
    <property type="term" value="F:SNAP receptor activity"/>
    <property type="evidence" value="ECO:0000314"/>
    <property type="project" value="FlyBase"/>
</dbReference>
<dbReference type="GO" id="GO:0000149">
    <property type="term" value="F:SNARE binding"/>
    <property type="evidence" value="ECO:0000353"/>
    <property type="project" value="RGD"/>
</dbReference>
<dbReference type="GO" id="GO:0019905">
    <property type="term" value="F:syntaxin binding"/>
    <property type="evidence" value="ECO:0000266"/>
    <property type="project" value="RGD"/>
</dbReference>
<dbReference type="GO" id="GO:0008333">
    <property type="term" value="P:endosome to lysosome transport"/>
    <property type="evidence" value="ECO:0000314"/>
    <property type="project" value="RGD"/>
</dbReference>
<dbReference type="GO" id="GO:0006886">
    <property type="term" value="P:intracellular protein transport"/>
    <property type="evidence" value="ECO:0000318"/>
    <property type="project" value="GO_Central"/>
</dbReference>
<dbReference type="GO" id="GO:0070925">
    <property type="term" value="P:organelle assembly"/>
    <property type="evidence" value="ECO:0000266"/>
    <property type="project" value="RGD"/>
</dbReference>
<dbReference type="GO" id="GO:0051640">
    <property type="term" value="P:organelle localization"/>
    <property type="evidence" value="ECO:0000266"/>
    <property type="project" value="RGD"/>
</dbReference>
<dbReference type="GO" id="GO:1902685">
    <property type="term" value="P:positive regulation of receptor localization to synapse"/>
    <property type="evidence" value="ECO:0000266"/>
    <property type="project" value="RGD"/>
</dbReference>
<dbReference type="GO" id="GO:0001916">
    <property type="term" value="P:positive regulation of T cell mediated cytotoxicity"/>
    <property type="evidence" value="ECO:0000266"/>
    <property type="project" value="RGD"/>
</dbReference>
<dbReference type="GO" id="GO:1903076">
    <property type="term" value="P:regulation of protein localization to plasma membrane"/>
    <property type="evidence" value="ECO:0000266"/>
    <property type="project" value="RGD"/>
</dbReference>
<dbReference type="GO" id="GO:0016079">
    <property type="term" value="P:synaptic vesicle exocytosis"/>
    <property type="evidence" value="ECO:0000304"/>
    <property type="project" value="RGD"/>
</dbReference>
<dbReference type="GO" id="GO:0016189">
    <property type="term" value="P:synaptic vesicle to endosome fusion"/>
    <property type="evidence" value="ECO:0000266"/>
    <property type="project" value="RGD"/>
</dbReference>
<dbReference type="GO" id="GO:0048278">
    <property type="term" value="P:vesicle docking"/>
    <property type="evidence" value="ECO:0000318"/>
    <property type="project" value="GO_Central"/>
</dbReference>
<dbReference type="GO" id="GO:0006906">
    <property type="term" value="P:vesicle fusion"/>
    <property type="evidence" value="ECO:0000314"/>
    <property type="project" value="RGD"/>
</dbReference>
<dbReference type="GO" id="GO:0016192">
    <property type="term" value="P:vesicle-mediated transport"/>
    <property type="evidence" value="ECO:0000314"/>
    <property type="project" value="RGD"/>
</dbReference>
<dbReference type="CDD" id="cd15875">
    <property type="entry name" value="SNARE_syntaxin7"/>
    <property type="match status" value="1"/>
</dbReference>
<dbReference type="FunFam" id="1.20.5.110:FF:000016">
    <property type="entry name" value="Syntaxin 12"/>
    <property type="match status" value="1"/>
</dbReference>
<dbReference type="FunFam" id="1.20.58.70:FF:000006">
    <property type="entry name" value="Syntaxin 7"/>
    <property type="match status" value="1"/>
</dbReference>
<dbReference type="Gene3D" id="1.20.5.110">
    <property type="match status" value="1"/>
</dbReference>
<dbReference type="Gene3D" id="1.20.58.70">
    <property type="match status" value="1"/>
</dbReference>
<dbReference type="InterPro" id="IPR010989">
    <property type="entry name" value="SNARE"/>
</dbReference>
<dbReference type="InterPro" id="IPR045242">
    <property type="entry name" value="Syntaxin"/>
</dbReference>
<dbReference type="InterPro" id="IPR006012">
    <property type="entry name" value="Syntaxin/epimorphin_CS"/>
</dbReference>
<dbReference type="InterPro" id="IPR006011">
    <property type="entry name" value="Syntaxin_N"/>
</dbReference>
<dbReference type="InterPro" id="IPR000727">
    <property type="entry name" value="T_SNARE_dom"/>
</dbReference>
<dbReference type="PANTHER" id="PTHR19957">
    <property type="entry name" value="SYNTAXIN"/>
    <property type="match status" value="1"/>
</dbReference>
<dbReference type="PANTHER" id="PTHR19957:SF90">
    <property type="entry name" value="SYNTAXIN-7"/>
    <property type="match status" value="1"/>
</dbReference>
<dbReference type="Pfam" id="PF05739">
    <property type="entry name" value="SNARE"/>
    <property type="match status" value="1"/>
</dbReference>
<dbReference type="Pfam" id="PF14523">
    <property type="entry name" value="Syntaxin_2"/>
    <property type="match status" value="1"/>
</dbReference>
<dbReference type="SMART" id="SM00503">
    <property type="entry name" value="SynN"/>
    <property type="match status" value="1"/>
</dbReference>
<dbReference type="SMART" id="SM00397">
    <property type="entry name" value="t_SNARE"/>
    <property type="match status" value="1"/>
</dbReference>
<dbReference type="SUPFAM" id="SSF47661">
    <property type="entry name" value="t-snare proteins"/>
    <property type="match status" value="1"/>
</dbReference>
<dbReference type="PROSITE" id="PS00914">
    <property type="entry name" value="SYNTAXIN"/>
    <property type="match status" value="1"/>
</dbReference>
<dbReference type="PROSITE" id="PS50192">
    <property type="entry name" value="T_SNARE"/>
    <property type="match status" value="1"/>
</dbReference>
<evidence type="ECO:0000250" key="1"/>
<evidence type="ECO:0000250" key="2">
    <source>
        <dbReference type="UniProtKB" id="O15400"/>
    </source>
</evidence>
<evidence type="ECO:0000250" key="3">
    <source>
        <dbReference type="UniProtKB" id="O70439"/>
    </source>
</evidence>
<evidence type="ECO:0000255" key="4"/>
<evidence type="ECO:0000255" key="5">
    <source>
        <dbReference type="PROSITE-ProRule" id="PRU00202"/>
    </source>
</evidence>
<evidence type="ECO:0000256" key="6">
    <source>
        <dbReference type="SAM" id="MobiDB-lite"/>
    </source>
</evidence>
<evidence type="ECO:0000305" key="7"/>
<organism>
    <name type="scientific">Rattus norvegicus</name>
    <name type="common">Rat</name>
    <dbReference type="NCBI Taxonomy" id="10116"/>
    <lineage>
        <taxon>Eukaryota</taxon>
        <taxon>Metazoa</taxon>
        <taxon>Chordata</taxon>
        <taxon>Craniata</taxon>
        <taxon>Vertebrata</taxon>
        <taxon>Euteleostomi</taxon>
        <taxon>Mammalia</taxon>
        <taxon>Eutheria</taxon>
        <taxon>Euarchontoglires</taxon>
        <taxon>Glires</taxon>
        <taxon>Rodentia</taxon>
        <taxon>Myomorpha</taxon>
        <taxon>Muroidea</taxon>
        <taxon>Muridae</taxon>
        <taxon>Murinae</taxon>
        <taxon>Rattus</taxon>
    </lineage>
</organism>
<name>STX7_RAT</name>